<dbReference type="EMBL" id="CP001184">
    <property type="protein sequence ID" value="ACI60337.1"/>
    <property type="molecule type" value="Genomic_DNA"/>
</dbReference>
<dbReference type="RefSeq" id="WP_004025603.1">
    <property type="nucleotide sequence ID" value="NC_011374.1"/>
</dbReference>
<dbReference type="SMR" id="B5ZB52"/>
<dbReference type="STRING" id="565575.UUR10_0238"/>
<dbReference type="GeneID" id="93848718"/>
<dbReference type="KEGG" id="uue:UUR10_0238"/>
<dbReference type="eggNOG" id="COG0094">
    <property type="taxonomic scope" value="Bacteria"/>
</dbReference>
<dbReference type="HOGENOM" id="CLU_061015_2_1_14"/>
<dbReference type="OrthoDB" id="9806626at2"/>
<dbReference type="Proteomes" id="UP000002018">
    <property type="component" value="Chromosome"/>
</dbReference>
<dbReference type="GO" id="GO:1990904">
    <property type="term" value="C:ribonucleoprotein complex"/>
    <property type="evidence" value="ECO:0007669"/>
    <property type="project" value="UniProtKB-KW"/>
</dbReference>
<dbReference type="GO" id="GO:0005840">
    <property type="term" value="C:ribosome"/>
    <property type="evidence" value="ECO:0007669"/>
    <property type="project" value="UniProtKB-KW"/>
</dbReference>
<dbReference type="GO" id="GO:0019843">
    <property type="term" value="F:rRNA binding"/>
    <property type="evidence" value="ECO:0007669"/>
    <property type="project" value="UniProtKB-UniRule"/>
</dbReference>
<dbReference type="GO" id="GO:0003735">
    <property type="term" value="F:structural constituent of ribosome"/>
    <property type="evidence" value="ECO:0007669"/>
    <property type="project" value="InterPro"/>
</dbReference>
<dbReference type="GO" id="GO:0000049">
    <property type="term" value="F:tRNA binding"/>
    <property type="evidence" value="ECO:0007669"/>
    <property type="project" value="UniProtKB-UniRule"/>
</dbReference>
<dbReference type="GO" id="GO:0006412">
    <property type="term" value="P:translation"/>
    <property type="evidence" value="ECO:0007669"/>
    <property type="project" value="UniProtKB-UniRule"/>
</dbReference>
<dbReference type="FunFam" id="3.30.1440.10:FF:000001">
    <property type="entry name" value="50S ribosomal protein L5"/>
    <property type="match status" value="1"/>
</dbReference>
<dbReference type="Gene3D" id="3.30.1440.10">
    <property type="match status" value="1"/>
</dbReference>
<dbReference type="HAMAP" id="MF_01333_B">
    <property type="entry name" value="Ribosomal_uL5_B"/>
    <property type="match status" value="1"/>
</dbReference>
<dbReference type="InterPro" id="IPR002132">
    <property type="entry name" value="Ribosomal_uL5"/>
</dbReference>
<dbReference type="InterPro" id="IPR020930">
    <property type="entry name" value="Ribosomal_uL5_bac-type"/>
</dbReference>
<dbReference type="InterPro" id="IPR031309">
    <property type="entry name" value="Ribosomal_uL5_C"/>
</dbReference>
<dbReference type="InterPro" id="IPR020929">
    <property type="entry name" value="Ribosomal_uL5_CS"/>
</dbReference>
<dbReference type="InterPro" id="IPR022803">
    <property type="entry name" value="Ribosomal_uL5_dom_sf"/>
</dbReference>
<dbReference type="InterPro" id="IPR031310">
    <property type="entry name" value="Ribosomal_uL5_N"/>
</dbReference>
<dbReference type="NCBIfam" id="NF000585">
    <property type="entry name" value="PRK00010.1"/>
    <property type="match status" value="1"/>
</dbReference>
<dbReference type="PANTHER" id="PTHR11994">
    <property type="entry name" value="60S RIBOSOMAL PROTEIN L11-RELATED"/>
    <property type="match status" value="1"/>
</dbReference>
<dbReference type="Pfam" id="PF00281">
    <property type="entry name" value="Ribosomal_L5"/>
    <property type="match status" value="1"/>
</dbReference>
<dbReference type="Pfam" id="PF00673">
    <property type="entry name" value="Ribosomal_L5_C"/>
    <property type="match status" value="1"/>
</dbReference>
<dbReference type="PIRSF" id="PIRSF002161">
    <property type="entry name" value="Ribosomal_L5"/>
    <property type="match status" value="1"/>
</dbReference>
<dbReference type="SUPFAM" id="SSF55282">
    <property type="entry name" value="RL5-like"/>
    <property type="match status" value="1"/>
</dbReference>
<dbReference type="PROSITE" id="PS00358">
    <property type="entry name" value="RIBOSOMAL_L5"/>
    <property type="match status" value="1"/>
</dbReference>
<gene>
    <name evidence="1" type="primary">rplE</name>
    <name type="ordered locus">UUR10_0238</name>
</gene>
<feature type="chain" id="PRO_1000142470" description="Large ribosomal subunit protein uL5">
    <location>
        <begin position="1"/>
        <end position="184"/>
    </location>
</feature>
<organism>
    <name type="scientific">Ureaplasma urealyticum serovar 10 (strain ATCC 33699 / Western)</name>
    <dbReference type="NCBI Taxonomy" id="565575"/>
    <lineage>
        <taxon>Bacteria</taxon>
        <taxon>Bacillati</taxon>
        <taxon>Mycoplasmatota</taxon>
        <taxon>Mycoplasmoidales</taxon>
        <taxon>Mycoplasmoidaceae</taxon>
        <taxon>Ureaplasma</taxon>
    </lineage>
</organism>
<reference key="1">
    <citation type="submission" date="2008-10" db="EMBL/GenBank/DDBJ databases">
        <title>Genome sequence of Ureaplasma urealyticum serovar 10 ATCC-33699.</title>
        <authorList>
            <person name="Shrivastava S."/>
            <person name="Methe B.A."/>
            <person name="Glass J."/>
            <person name="White K."/>
            <person name="Duffy L.B."/>
        </authorList>
    </citation>
    <scope>NUCLEOTIDE SEQUENCE [LARGE SCALE GENOMIC DNA]</scope>
    <source>
        <strain>ATCC 33699 / Western</strain>
    </source>
</reference>
<evidence type="ECO:0000255" key="1">
    <source>
        <dbReference type="HAMAP-Rule" id="MF_01333"/>
    </source>
</evidence>
<evidence type="ECO:0000305" key="2"/>
<sequence length="184" mass="20340">MAFLKDLYKNKVAKDLQKEFAYSSVMQIPKIEKVVINAGIGNAVADKKHLEAAISELTLITGQRPVETKAKKSIATFKLRAGQSIGAKVTLRGDRMWAFIETLFNIALPRVRDFKGISNNSFDDQGNYTLGIKEQIIFPQVVYDDVKSVRGFDVTFVTTAKTAQEAKALLVGLGAPFQKVRGDK</sequence>
<protein>
    <recommendedName>
        <fullName evidence="1">Large ribosomal subunit protein uL5</fullName>
    </recommendedName>
    <alternativeName>
        <fullName evidence="2">50S ribosomal protein L5</fullName>
    </alternativeName>
</protein>
<comment type="function">
    <text evidence="1">This is one of the proteins that bind and probably mediate the attachment of the 5S RNA into the large ribosomal subunit, where it forms part of the central protuberance. In the 70S ribosome it contacts protein S13 of the 30S subunit (bridge B1b), connecting the 2 subunits; this bridge is implicated in subunit movement. Contacts the P site tRNA; the 5S rRNA and some of its associated proteins might help stabilize positioning of ribosome-bound tRNAs.</text>
</comment>
<comment type="subunit">
    <text evidence="1">Part of the 50S ribosomal subunit; part of the 5S rRNA/L5/L18/L25 subcomplex. Contacts the 5S rRNA and the P site tRNA. Forms a bridge to the 30S subunit in the 70S ribosome.</text>
</comment>
<comment type="similarity">
    <text evidence="1">Belongs to the universal ribosomal protein uL5 family.</text>
</comment>
<accession>B5ZB52</accession>
<keyword id="KW-0687">Ribonucleoprotein</keyword>
<keyword id="KW-0689">Ribosomal protein</keyword>
<keyword id="KW-0694">RNA-binding</keyword>
<keyword id="KW-0699">rRNA-binding</keyword>
<keyword id="KW-0820">tRNA-binding</keyword>
<proteinExistence type="inferred from homology"/>
<name>RL5_UREU1</name>